<keyword id="KW-0963">Cytoplasm</keyword>
<keyword id="KW-1185">Reference proteome</keyword>
<keyword id="KW-0808">Transferase</keyword>
<keyword id="KW-0816">Tricarboxylic acid cycle</keyword>
<comment type="catalytic activity">
    <reaction evidence="1">
        <text>oxaloacetate + acetyl-CoA + H2O = citrate + CoA + H(+)</text>
        <dbReference type="Rhea" id="RHEA:16845"/>
        <dbReference type="ChEBI" id="CHEBI:15377"/>
        <dbReference type="ChEBI" id="CHEBI:15378"/>
        <dbReference type="ChEBI" id="CHEBI:16452"/>
        <dbReference type="ChEBI" id="CHEBI:16947"/>
        <dbReference type="ChEBI" id="CHEBI:57287"/>
        <dbReference type="ChEBI" id="CHEBI:57288"/>
        <dbReference type="EC" id="2.3.3.16"/>
    </reaction>
</comment>
<comment type="pathway">
    <text>Carbohydrate metabolism; tricarboxylic acid cycle; isocitrate from oxaloacetate: step 1/2.</text>
</comment>
<comment type="subcellular location">
    <subcellularLocation>
        <location evidence="3">Cytoplasm</location>
    </subcellularLocation>
</comment>
<comment type="similarity">
    <text evidence="4">Belongs to the citrate synthase family.</text>
</comment>
<reference key="1">
    <citation type="journal article" date="2002" name="Nature">
        <title>Sequence and analysis of chromosome 2 of Dictyostelium discoideum.</title>
        <authorList>
            <person name="Gloeckner G."/>
            <person name="Eichinger L."/>
            <person name="Szafranski K."/>
            <person name="Pachebat J.A."/>
            <person name="Bankier A.T."/>
            <person name="Dear P.H."/>
            <person name="Lehmann R."/>
            <person name="Baumgart C."/>
            <person name="Parra G."/>
            <person name="Abril J.F."/>
            <person name="Guigo R."/>
            <person name="Kumpf K."/>
            <person name="Tunggal B."/>
            <person name="Cox E.C."/>
            <person name="Quail M.A."/>
            <person name="Platzer M."/>
            <person name="Rosenthal A."/>
            <person name="Noegel A.A."/>
        </authorList>
    </citation>
    <scope>NUCLEOTIDE SEQUENCE [LARGE SCALE GENOMIC DNA]</scope>
    <source>
        <strain>AX4</strain>
    </source>
</reference>
<reference key="2">
    <citation type="journal article" date="2005" name="Nature">
        <title>The genome of the social amoeba Dictyostelium discoideum.</title>
        <authorList>
            <person name="Eichinger L."/>
            <person name="Pachebat J.A."/>
            <person name="Gloeckner G."/>
            <person name="Rajandream M.A."/>
            <person name="Sucgang R."/>
            <person name="Berriman M."/>
            <person name="Song J."/>
            <person name="Olsen R."/>
            <person name="Szafranski K."/>
            <person name="Xu Q."/>
            <person name="Tunggal B."/>
            <person name="Kummerfeld S."/>
            <person name="Madera M."/>
            <person name="Konfortov B.A."/>
            <person name="Rivero F."/>
            <person name="Bankier A.T."/>
            <person name="Lehmann R."/>
            <person name="Hamlin N."/>
            <person name="Davies R."/>
            <person name="Gaudet P."/>
            <person name="Fey P."/>
            <person name="Pilcher K."/>
            <person name="Chen G."/>
            <person name="Saunders D."/>
            <person name="Sodergren E.J."/>
            <person name="Davis P."/>
            <person name="Kerhornou A."/>
            <person name="Nie X."/>
            <person name="Hall N."/>
            <person name="Anjard C."/>
            <person name="Hemphill L."/>
            <person name="Bason N."/>
            <person name="Farbrother P."/>
            <person name="Desany B."/>
            <person name="Just E."/>
            <person name="Morio T."/>
            <person name="Rost R."/>
            <person name="Churcher C.M."/>
            <person name="Cooper J."/>
            <person name="Haydock S."/>
            <person name="van Driessche N."/>
            <person name="Cronin A."/>
            <person name="Goodhead I."/>
            <person name="Muzny D.M."/>
            <person name="Mourier T."/>
            <person name="Pain A."/>
            <person name="Lu M."/>
            <person name="Harper D."/>
            <person name="Lindsay R."/>
            <person name="Hauser H."/>
            <person name="James K.D."/>
            <person name="Quiles M."/>
            <person name="Madan Babu M."/>
            <person name="Saito T."/>
            <person name="Buchrieser C."/>
            <person name="Wardroper A."/>
            <person name="Felder M."/>
            <person name="Thangavelu M."/>
            <person name="Johnson D."/>
            <person name="Knights A."/>
            <person name="Loulseged H."/>
            <person name="Mungall K.L."/>
            <person name="Oliver K."/>
            <person name="Price C."/>
            <person name="Quail M.A."/>
            <person name="Urushihara H."/>
            <person name="Hernandez J."/>
            <person name="Rabbinowitsch E."/>
            <person name="Steffen D."/>
            <person name="Sanders M."/>
            <person name="Ma J."/>
            <person name="Kohara Y."/>
            <person name="Sharp S."/>
            <person name="Simmonds M.N."/>
            <person name="Spiegler S."/>
            <person name="Tivey A."/>
            <person name="Sugano S."/>
            <person name="White B."/>
            <person name="Walker D."/>
            <person name="Woodward J.R."/>
            <person name="Winckler T."/>
            <person name="Tanaka Y."/>
            <person name="Shaulsky G."/>
            <person name="Schleicher M."/>
            <person name="Weinstock G.M."/>
            <person name="Rosenthal A."/>
            <person name="Cox E.C."/>
            <person name="Chisholm R.L."/>
            <person name="Gibbs R.A."/>
            <person name="Loomis W.F."/>
            <person name="Platzer M."/>
            <person name="Kay R.R."/>
            <person name="Williams J.G."/>
            <person name="Dear P.H."/>
            <person name="Noegel A.A."/>
            <person name="Barrell B.G."/>
            <person name="Kuspa A."/>
        </authorList>
    </citation>
    <scope>NUCLEOTIDE SEQUENCE [LARGE SCALE GENOMIC DNA]</scope>
    <source>
        <strain>AX4</strain>
    </source>
</reference>
<reference key="3">
    <citation type="journal article" date="2004" name="Mol. Microbiol.">
        <title>Disruption of the peroxisomal citrate synthase CshA affects cell growth and multicellular development in Dictyostelium discoideum.</title>
        <authorList>
            <person name="Huang Y.-C."/>
            <person name="Chen Y.-H."/>
            <person name="Lo S.-R."/>
            <person name="Liu C.-I."/>
            <person name="Wang C.-W."/>
            <person name="Chang W.-T."/>
        </authorList>
    </citation>
    <scope>SUBCELLULAR LOCATION</scope>
    <source>
        <strain>AX2</strain>
    </source>
</reference>
<gene>
    <name type="primary">gltA</name>
    <name type="ORF">DDB_G0276965</name>
</gene>
<proteinExistence type="inferred from homology"/>
<sequence length="512" mass="58291">MSSNSQEDNNKTTEKKNTLTVIDNRTGKSYEIPINHETVKSIDFRAIKEQSIDFGTMIYDPGYYNTAVCKSQITYIDGDRGILEYRGYPIEQLAEKSSFLEVSYLLIYGDLPSKEQSNLWNTKIMNHTFIHENLISMMKSFRYDAHPMGMLISSLSAMSTFYPEANPALAGVDIYKNKQLMNKQIFRILGKLPTIAACAYRHRIGRPYNDPSNTLSYTENFLYMLDRLSESNYKPHPVLTRALDKLFIIHADHELNCSTATMRQIASTLVDPYTACAGSAGALYGPLHGGANEAVLRMLEAIGTIENIPKFIEQVKQKKQRLMGFGHRVYKSYDPRAKILKTVTMEIFALLGKNPLMQIATELERLALSDSYFIERQLYPNVDFYSGIIYKSMGFPTDMFPVLFSIPRAAGWLAHWVEELADPELRIFRPRQIYMGRRNMNYVPMDARQVQQHNSGEKLSSFSSGFDRRRDVSEELFNFEDGAIPKTATGSKSQLSASIEQSFGEKISPQSH</sequence>
<evidence type="ECO:0000255" key="1">
    <source>
        <dbReference type="PROSITE-ProRule" id="PRU10117"/>
    </source>
</evidence>
<evidence type="ECO:0000256" key="2">
    <source>
        <dbReference type="SAM" id="MobiDB-lite"/>
    </source>
</evidence>
<evidence type="ECO:0000269" key="3">
    <source>
    </source>
</evidence>
<evidence type="ECO:0000305" key="4"/>
<dbReference type="EC" id="2.3.3.16"/>
<dbReference type="EMBL" id="AAFI02000019">
    <property type="protein sequence ID" value="EAL68984.1"/>
    <property type="molecule type" value="Genomic_DNA"/>
</dbReference>
<dbReference type="RefSeq" id="XP_642824.1">
    <property type="nucleotide sequence ID" value="XM_637732.1"/>
</dbReference>
<dbReference type="SMR" id="Q86AV6"/>
<dbReference type="FunCoup" id="Q86AV6">
    <property type="interactions" value="151"/>
</dbReference>
<dbReference type="STRING" id="44689.Q86AV6"/>
<dbReference type="PaxDb" id="44689-DDB0214944"/>
<dbReference type="EnsemblProtists" id="EAL68984">
    <property type="protein sequence ID" value="EAL68984"/>
    <property type="gene ID" value="DDB_G0276965"/>
</dbReference>
<dbReference type="GeneID" id="8620687"/>
<dbReference type="KEGG" id="ddi:DDB_G0276965"/>
<dbReference type="dictyBase" id="DDB_G0276965">
    <property type="gene designation" value="gltA"/>
</dbReference>
<dbReference type="VEuPathDB" id="AmoebaDB:DDB_G0276965"/>
<dbReference type="eggNOG" id="KOG2617">
    <property type="taxonomic scope" value="Eukaryota"/>
</dbReference>
<dbReference type="HOGENOM" id="CLU_025068_0_1_1"/>
<dbReference type="InParanoid" id="Q86AV6"/>
<dbReference type="OMA" id="WVAHWNE"/>
<dbReference type="PhylomeDB" id="Q86AV6"/>
<dbReference type="UniPathway" id="UPA00223">
    <property type="reaction ID" value="UER00717"/>
</dbReference>
<dbReference type="PRO" id="PR:Q86AV6"/>
<dbReference type="Proteomes" id="UP000002195">
    <property type="component" value="Chromosome 2"/>
</dbReference>
<dbReference type="GO" id="GO:0005829">
    <property type="term" value="C:cytosol"/>
    <property type="evidence" value="ECO:0000303"/>
    <property type="project" value="dictyBase"/>
</dbReference>
<dbReference type="GO" id="GO:0005759">
    <property type="term" value="C:mitochondrial matrix"/>
    <property type="evidence" value="ECO:0000318"/>
    <property type="project" value="GO_Central"/>
</dbReference>
<dbReference type="GO" id="GO:0004108">
    <property type="term" value="F:citrate (Si)-synthase activity"/>
    <property type="evidence" value="ECO:0000250"/>
    <property type="project" value="dictyBase"/>
</dbReference>
<dbReference type="GO" id="GO:0005975">
    <property type="term" value="P:carbohydrate metabolic process"/>
    <property type="evidence" value="ECO:0000318"/>
    <property type="project" value="GO_Central"/>
</dbReference>
<dbReference type="GO" id="GO:0006097">
    <property type="term" value="P:glyoxylate cycle"/>
    <property type="evidence" value="ECO:0000304"/>
    <property type="project" value="dictyBase"/>
</dbReference>
<dbReference type="GO" id="GO:0006099">
    <property type="term" value="P:tricarboxylic acid cycle"/>
    <property type="evidence" value="ECO:0000318"/>
    <property type="project" value="GO_Central"/>
</dbReference>
<dbReference type="CDD" id="cd06115">
    <property type="entry name" value="AthCS_per_like"/>
    <property type="match status" value="1"/>
</dbReference>
<dbReference type="FunFam" id="1.10.230.10:FF:000002">
    <property type="entry name" value="Citrate synthase"/>
    <property type="match status" value="1"/>
</dbReference>
<dbReference type="FunFam" id="1.10.580.10:FF:000005">
    <property type="entry name" value="Citrate synthase"/>
    <property type="match status" value="1"/>
</dbReference>
<dbReference type="Gene3D" id="1.10.580.10">
    <property type="entry name" value="Citrate Synthase, domain 1"/>
    <property type="match status" value="1"/>
</dbReference>
<dbReference type="Gene3D" id="1.10.230.10">
    <property type="entry name" value="Cytochrome P450-Terp, domain 2"/>
    <property type="match status" value="1"/>
</dbReference>
<dbReference type="InterPro" id="IPR016142">
    <property type="entry name" value="Citrate_synth-like_lrg_a-sub"/>
</dbReference>
<dbReference type="InterPro" id="IPR016143">
    <property type="entry name" value="Citrate_synth-like_sm_a-sub"/>
</dbReference>
<dbReference type="InterPro" id="IPR002020">
    <property type="entry name" value="Citrate_synthase"/>
</dbReference>
<dbReference type="InterPro" id="IPR019810">
    <property type="entry name" value="Citrate_synthase_AS"/>
</dbReference>
<dbReference type="InterPro" id="IPR036969">
    <property type="entry name" value="Citrate_synthase_sf"/>
</dbReference>
<dbReference type="InterPro" id="IPR010953">
    <property type="entry name" value="Citrate_synthase_typ-I"/>
</dbReference>
<dbReference type="NCBIfam" id="TIGR01798">
    <property type="entry name" value="cit_synth_I"/>
    <property type="match status" value="1"/>
</dbReference>
<dbReference type="NCBIfam" id="NF004126">
    <property type="entry name" value="PRK05614.1"/>
    <property type="match status" value="1"/>
</dbReference>
<dbReference type="PANTHER" id="PTHR42871">
    <property type="entry name" value="CITRATE SYNTHASE"/>
    <property type="match status" value="1"/>
</dbReference>
<dbReference type="PANTHER" id="PTHR42871:SF1">
    <property type="entry name" value="CITRATE SYNTHASE"/>
    <property type="match status" value="1"/>
</dbReference>
<dbReference type="Pfam" id="PF00285">
    <property type="entry name" value="Citrate_synt"/>
    <property type="match status" value="1"/>
</dbReference>
<dbReference type="PRINTS" id="PR00143">
    <property type="entry name" value="CITRTSNTHASE"/>
</dbReference>
<dbReference type="SUPFAM" id="SSF48256">
    <property type="entry name" value="Citrate synthase"/>
    <property type="match status" value="1"/>
</dbReference>
<dbReference type="PROSITE" id="PS00480">
    <property type="entry name" value="CITRATE_SYNTHASE"/>
    <property type="match status" value="1"/>
</dbReference>
<feature type="chain" id="PRO_0000327838" description="Citrate synthase">
    <location>
        <begin position="1"/>
        <end position="512"/>
    </location>
</feature>
<feature type="region of interest" description="Disordered" evidence="2">
    <location>
        <begin position="483"/>
        <end position="512"/>
    </location>
</feature>
<feature type="compositionally biased region" description="Polar residues" evidence="2">
    <location>
        <begin position="488"/>
        <end position="501"/>
    </location>
</feature>
<feature type="active site" evidence="1">
    <location>
        <position position="288"/>
    </location>
</feature>
<feature type="active site" evidence="1">
    <location>
        <position position="327"/>
    </location>
</feature>
<feature type="active site" evidence="1">
    <location>
        <position position="383"/>
    </location>
</feature>
<organism>
    <name type="scientific">Dictyostelium discoideum</name>
    <name type="common">Social amoeba</name>
    <dbReference type="NCBI Taxonomy" id="44689"/>
    <lineage>
        <taxon>Eukaryota</taxon>
        <taxon>Amoebozoa</taxon>
        <taxon>Evosea</taxon>
        <taxon>Eumycetozoa</taxon>
        <taxon>Dictyostelia</taxon>
        <taxon>Dictyosteliales</taxon>
        <taxon>Dictyosteliaceae</taxon>
        <taxon>Dictyostelium</taxon>
    </lineage>
</organism>
<accession>Q86AV6</accession>
<accession>Q550V8</accession>
<name>CISYC_DICDI</name>
<protein>
    <recommendedName>
        <fullName>Citrate synthase</fullName>
        <ecNumber>2.3.3.16</ecNumber>
    </recommendedName>
</protein>